<protein>
    <recommendedName>
        <fullName evidence="1">Holo-[acyl-carrier-protein] synthase</fullName>
        <shortName evidence="1">Holo-ACP synthase</shortName>
        <ecNumber evidence="1">2.7.8.7</ecNumber>
    </recommendedName>
    <alternativeName>
        <fullName evidence="1">4'-phosphopantetheinyl transferase AcpS</fullName>
    </alternativeName>
</protein>
<organism>
    <name type="scientific">Paraburkholderia phymatum (strain DSM 17167 / CIP 108236 / LMG 21445 / STM815)</name>
    <name type="common">Burkholderia phymatum</name>
    <dbReference type="NCBI Taxonomy" id="391038"/>
    <lineage>
        <taxon>Bacteria</taxon>
        <taxon>Pseudomonadati</taxon>
        <taxon>Pseudomonadota</taxon>
        <taxon>Betaproteobacteria</taxon>
        <taxon>Burkholderiales</taxon>
        <taxon>Burkholderiaceae</taxon>
        <taxon>Paraburkholderia</taxon>
    </lineage>
</organism>
<name>ACPS_PARP8</name>
<sequence>MAIYGIGTDIVQVSRVAAVMQRTNGRFAEKVLGPDELRVYHARHARSQARGLAFLATRFSVKEAFSKAIGLGMRWPMTWRALQTLNEPSGRPTCVASGELADWLAERGITSRVTLSDERDYAVSFVIAETPDTAD</sequence>
<accession>B2JFK6</accession>
<reference key="1">
    <citation type="journal article" date="2014" name="Stand. Genomic Sci.">
        <title>Complete genome sequence of Burkholderia phymatum STM815(T), a broad host range and efficient nitrogen-fixing symbiont of Mimosa species.</title>
        <authorList>
            <person name="Moulin L."/>
            <person name="Klonowska A."/>
            <person name="Caroline B."/>
            <person name="Booth K."/>
            <person name="Vriezen J.A."/>
            <person name="Melkonian R."/>
            <person name="James E.K."/>
            <person name="Young J.P."/>
            <person name="Bena G."/>
            <person name="Hauser L."/>
            <person name="Land M."/>
            <person name="Kyrpides N."/>
            <person name="Bruce D."/>
            <person name="Chain P."/>
            <person name="Copeland A."/>
            <person name="Pitluck S."/>
            <person name="Woyke T."/>
            <person name="Lizotte-Waniewski M."/>
            <person name="Bristow J."/>
            <person name="Riley M."/>
        </authorList>
    </citation>
    <scope>NUCLEOTIDE SEQUENCE [LARGE SCALE GENOMIC DNA]</scope>
    <source>
        <strain>DSM 17167 / CIP 108236 / LMG 21445 / STM815</strain>
    </source>
</reference>
<feature type="chain" id="PRO_1000093861" description="Holo-[acyl-carrier-protein] synthase">
    <location>
        <begin position="1"/>
        <end position="135"/>
    </location>
</feature>
<feature type="binding site" evidence="1">
    <location>
        <position position="9"/>
    </location>
    <ligand>
        <name>Mg(2+)</name>
        <dbReference type="ChEBI" id="CHEBI:18420"/>
    </ligand>
</feature>
<feature type="binding site" evidence="1">
    <location>
        <position position="63"/>
    </location>
    <ligand>
        <name>Mg(2+)</name>
        <dbReference type="ChEBI" id="CHEBI:18420"/>
    </ligand>
</feature>
<proteinExistence type="inferred from homology"/>
<keyword id="KW-0963">Cytoplasm</keyword>
<keyword id="KW-0275">Fatty acid biosynthesis</keyword>
<keyword id="KW-0276">Fatty acid metabolism</keyword>
<keyword id="KW-0444">Lipid biosynthesis</keyword>
<keyword id="KW-0443">Lipid metabolism</keyword>
<keyword id="KW-0460">Magnesium</keyword>
<keyword id="KW-0479">Metal-binding</keyword>
<keyword id="KW-1185">Reference proteome</keyword>
<keyword id="KW-0808">Transferase</keyword>
<comment type="function">
    <text evidence="1">Transfers the 4'-phosphopantetheine moiety from coenzyme A to a Ser of acyl-carrier-protein.</text>
</comment>
<comment type="catalytic activity">
    <reaction evidence="1">
        <text>apo-[ACP] + CoA = holo-[ACP] + adenosine 3',5'-bisphosphate + H(+)</text>
        <dbReference type="Rhea" id="RHEA:12068"/>
        <dbReference type="Rhea" id="RHEA-COMP:9685"/>
        <dbReference type="Rhea" id="RHEA-COMP:9690"/>
        <dbReference type="ChEBI" id="CHEBI:15378"/>
        <dbReference type="ChEBI" id="CHEBI:29999"/>
        <dbReference type="ChEBI" id="CHEBI:57287"/>
        <dbReference type="ChEBI" id="CHEBI:58343"/>
        <dbReference type="ChEBI" id="CHEBI:64479"/>
        <dbReference type="EC" id="2.7.8.7"/>
    </reaction>
</comment>
<comment type="cofactor">
    <cofactor evidence="1">
        <name>Mg(2+)</name>
        <dbReference type="ChEBI" id="CHEBI:18420"/>
    </cofactor>
</comment>
<comment type="subcellular location">
    <subcellularLocation>
        <location evidence="1">Cytoplasm</location>
    </subcellularLocation>
</comment>
<comment type="similarity">
    <text evidence="1">Belongs to the P-Pant transferase superfamily. AcpS family.</text>
</comment>
<dbReference type="EC" id="2.7.8.7" evidence="1"/>
<dbReference type="EMBL" id="CP001043">
    <property type="protein sequence ID" value="ACC70034.1"/>
    <property type="molecule type" value="Genomic_DNA"/>
</dbReference>
<dbReference type="RefSeq" id="WP_012400253.1">
    <property type="nucleotide sequence ID" value="NC_010622.1"/>
</dbReference>
<dbReference type="SMR" id="B2JFK6"/>
<dbReference type="STRING" id="391038.Bphy_0845"/>
<dbReference type="KEGG" id="bph:Bphy_0845"/>
<dbReference type="eggNOG" id="COG0736">
    <property type="taxonomic scope" value="Bacteria"/>
</dbReference>
<dbReference type="HOGENOM" id="CLU_089696_3_1_4"/>
<dbReference type="OrthoDB" id="517356at2"/>
<dbReference type="Proteomes" id="UP000001192">
    <property type="component" value="Chromosome 1"/>
</dbReference>
<dbReference type="GO" id="GO:0005737">
    <property type="term" value="C:cytoplasm"/>
    <property type="evidence" value="ECO:0007669"/>
    <property type="project" value="UniProtKB-SubCell"/>
</dbReference>
<dbReference type="GO" id="GO:0008897">
    <property type="term" value="F:holo-[acyl-carrier-protein] synthase activity"/>
    <property type="evidence" value="ECO:0007669"/>
    <property type="project" value="UniProtKB-UniRule"/>
</dbReference>
<dbReference type="GO" id="GO:0000287">
    <property type="term" value="F:magnesium ion binding"/>
    <property type="evidence" value="ECO:0007669"/>
    <property type="project" value="UniProtKB-UniRule"/>
</dbReference>
<dbReference type="GO" id="GO:0006633">
    <property type="term" value="P:fatty acid biosynthetic process"/>
    <property type="evidence" value="ECO:0007669"/>
    <property type="project" value="UniProtKB-UniRule"/>
</dbReference>
<dbReference type="Gene3D" id="3.90.470.20">
    <property type="entry name" value="4'-phosphopantetheinyl transferase domain"/>
    <property type="match status" value="1"/>
</dbReference>
<dbReference type="HAMAP" id="MF_00101">
    <property type="entry name" value="AcpS"/>
    <property type="match status" value="1"/>
</dbReference>
<dbReference type="InterPro" id="IPR008278">
    <property type="entry name" value="4-PPantetheinyl_Trfase_dom"/>
</dbReference>
<dbReference type="InterPro" id="IPR037143">
    <property type="entry name" value="4-PPantetheinyl_Trfase_dom_sf"/>
</dbReference>
<dbReference type="InterPro" id="IPR002582">
    <property type="entry name" value="ACPS"/>
</dbReference>
<dbReference type="InterPro" id="IPR004568">
    <property type="entry name" value="Ppantetheine-prot_Trfase_dom"/>
</dbReference>
<dbReference type="NCBIfam" id="TIGR00516">
    <property type="entry name" value="acpS"/>
    <property type="match status" value="1"/>
</dbReference>
<dbReference type="NCBIfam" id="TIGR00556">
    <property type="entry name" value="pantethn_trn"/>
    <property type="match status" value="1"/>
</dbReference>
<dbReference type="Pfam" id="PF01648">
    <property type="entry name" value="ACPS"/>
    <property type="match status" value="1"/>
</dbReference>
<dbReference type="SUPFAM" id="SSF56214">
    <property type="entry name" value="4'-phosphopantetheinyl transferase"/>
    <property type="match status" value="1"/>
</dbReference>
<gene>
    <name evidence="1" type="primary">acpS</name>
    <name type="ordered locus">Bphy_0845</name>
</gene>
<evidence type="ECO:0000255" key="1">
    <source>
        <dbReference type="HAMAP-Rule" id="MF_00101"/>
    </source>
</evidence>